<comment type="function">
    <text>G-protein coupled receptor for glutamate. Ligand binding causes a conformation change that triggers signaling via guanine nucleotide-binding proteins (G proteins) and modulates the activity of down-stream effectors. Signaling inhibits adenylate cyclase activity.</text>
</comment>
<comment type="subunit">
    <text evidence="4">Interacts with PICK1.</text>
</comment>
<comment type="subcellular location">
    <subcellularLocation>
        <location>Cell membrane</location>
        <topology>Multi-pass membrane protein</topology>
    </subcellularLocation>
</comment>
<comment type="tissue specificity">
    <text>Prominent expression in olfactory bulb, pontine gray, lateral reticular nucleus of the thalamus, and piriform cortex. Less abundant expression incerebral cortex, hippocampus, cerebellum, and mammillary body.</text>
</comment>
<comment type="similarity">
    <text evidence="5">Belongs to the G-protein coupled receptor 3 family.</text>
</comment>
<organism>
    <name type="scientific">Rattus norvegicus</name>
    <name type="common">Rat</name>
    <dbReference type="NCBI Taxonomy" id="10116"/>
    <lineage>
        <taxon>Eukaryota</taxon>
        <taxon>Metazoa</taxon>
        <taxon>Chordata</taxon>
        <taxon>Craniata</taxon>
        <taxon>Vertebrata</taxon>
        <taxon>Euteleostomi</taxon>
        <taxon>Mammalia</taxon>
        <taxon>Eutheria</taxon>
        <taxon>Euarchontoglires</taxon>
        <taxon>Glires</taxon>
        <taxon>Rodentia</taxon>
        <taxon>Myomorpha</taxon>
        <taxon>Muroidea</taxon>
        <taxon>Muridae</taxon>
        <taxon>Murinae</taxon>
        <taxon>Rattus</taxon>
    </lineage>
</organism>
<feature type="signal peptide" evidence="3">
    <location>
        <begin position="1"/>
        <end position="33"/>
    </location>
</feature>
<feature type="chain" id="PRO_0000012943" description="Metabotropic glutamate receptor 8">
    <location>
        <begin position="34"/>
        <end position="908"/>
    </location>
</feature>
<feature type="topological domain" description="Extracellular" evidence="3">
    <location>
        <begin position="34"/>
        <end position="583"/>
    </location>
</feature>
<feature type="transmembrane region" description="Helical; Name=1" evidence="3">
    <location>
        <begin position="584"/>
        <end position="608"/>
    </location>
</feature>
<feature type="topological domain" description="Cytoplasmic" evidence="3">
    <location>
        <begin position="609"/>
        <end position="620"/>
    </location>
</feature>
<feature type="transmembrane region" description="Helical; Name=2" evidence="3">
    <location>
        <begin position="621"/>
        <end position="641"/>
    </location>
</feature>
<feature type="topological domain" description="Extracellular" evidence="3">
    <location>
        <begin position="642"/>
        <end position="647"/>
    </location>
</feature>
<feature type="transmembrane region" description="Helical; Name=3" evidence="3">
    <location>
        <begin position="648"/>
        <end position="668"/>
    </location>
</feature>
<feature type="topological domain" description="Cytoplasmic" evidence="3">
    <location>
        <begin position="669"/>
        <end position="695"/>
    </location>
</feature>
<feature type="transmembrane region" description="Helical; Name=4" evidence="3">
    <location>
        <begin position="696"/>
        <end position="716"/>
    </location>
</feature>
<feature type="topological domain" description="Extracellular" evidence="3">
    <location>
        <begin position="717"/>
        <end position="746"/>
    </location>
</feature>
<feature type="transmembrane region" description="Helical; Name=5" evidence="3">
    <location>
        <begin position="747"/>
        <end position="768"/>
    </location>
</feature>
<feature type="topological domain" description="Cytoplasmic" evidence="3">
    <location>
        <begin position="769"/>
        <end position="781"/>
    </location>
</feature>
<feature type="transmembrane region" description="Helical; Name=6" evidence="3">
    <location>
        <begin position="782"/>
        <end position="803"/>
    </location>
</feature>
<feature type="topological domain" description="Extracellular" evidence="3">
    <location>
        <begin position="804"/>
        <end position="818"/>
    </location>
</feature>
<feature type="transmembrane region" description="Helical; Name=7" evidence="3">
    <location>
        <begin position="819"/>
        <end position="843"/>
    </location>
</feature>
<feature type="topological domain" description="Cytoplasmic" evidence="3">
    <location>
        <begin position="844"/>
        <end position="908"/>
    </location>
</feature>
<feature type="binding site" evidence="1">
    <location>
        <position position="156"/>
    </location>
    <ligand>
        <name>L-glutamate</name>
        <dbReference type="ChEBI" id="CHEBI:29985"/>
    </ligand>
</feature>
<feature type="binding site" evidence="1">
    <location>
        <begin position="177"/>
        <end position="179"/>
    </location>
    <ligand>
        <name>L-glutamate</name>
        <dbReference type="ChEBI" id="CHEBI:29985"/>
    </ligand>
</feature>
<feature type="binding site" evidence="1">
    <location>
        <position position="227"/>
    </location>
    <ligand>
        <name>L-glutamate</name>
        <dbReference type="ChEBI" id="CHEBI:29985"/>
    </ligand>
</feature>
<feature type="binding site" evidence="1">
    <location>
        <position position="309"/>
    </location>
    <ligand>
        <name>L-glutamate</name>
        <dbReference type="ChEBI" id="CHEBI:29985"/>
    </ligand>
</feature>
<feature type="binding site" evidence="1">
    <location>
        <position position="401"/>
    </location>
    <ligand>
        <name>L-glutamate</name>
        <dbReference type="ChEBI" id="CHEBI:29985"/>
    </ligand>
</feature>
<feature type="glycosylation site" description="N-linked (GlcNAc...) asparagine" evidence="3">
    <location>
        <position position="95"/>
    </location>
</feature>
<feature type="glycosylation site" description="N-linked (GlcNAc...) asparagine" evidence="3">
    <location>
        <position position="298"/>
    </location>
</feature>
<feature type="glycosylation site" description="N-linked (GlcNAc...) asparagine" evidence="3">
    <location>
        <position position="452"/>
    </location>
</feature>
<feature type="glycosylation site" description="N-linked (GlcNAc...) asparagine" evidence="3">
    <location>
        <position position="480"/>
    </location>
</feature>
<feature type="glycosylation site" description="N-linked (GlcNAc...) asparagine" evidence="3">
    <location>
        <position position="565"/>
    </location>
</feature>
<feature type="disulfide bond" evidence="1">
    <location>
        <begin position="64"/>
        <end position="106"/>
    </location>
</feature>
<feature type="disulfide bond" evidence="1">
    <location>
        <begin position="246"/>
        <end position="534"/>
    </location>
</feature>
<feature type="disulfide bond" evidence="1">
    <location>
        <begin position="369"/>
        <end position="384"/>
    </location>
</feature>
<feature type="disulfide bond" evidence="1">
    <location>
        <begin position="424"/>
        <end position="431"/>
    </location>
</feature>
<feature type="disulfide bond" evidence="1">
    <location>
        <begin position="516"/>
        <end position="535"/>
    </location>
</feature>
<feature type="disulfide bond" evidence="1">
    <location>
        <begin position="520"/>
        <end position="538"/>
    </location>
</feature>
<feature type="disulfide bond" evidence="1">
    <location>
        <begin position="541"/>
        <end position="553"/>
    </location>
</feature>
<feature type="disulfide bond" evidence="1">
    <location>
        <begin position="556"/>
        <end position="569"/>
    </location>
</feature>
<feature type="cross-link" description="Glycyl lysine isopeptide (Lys-Gly) (interchain with G-Cter in SUMO1)" evidence="2">
    <location>
        <position position="882"/>
    </location>
</feature>
<dbReference type="EMBL" id="U63288">
    <property type="protein sequence ID" value="AAB09537.1"/>
    <property type="molecule type" value="mRNA"/>
</dbReference>
<dbReference type="RefSeq" id="NP_071538.1">
    <property type="nucleotide sequence ID" value="NM_022202.1"/>
</dbReference>
<dbReference type="SMR" id="P70579"/>
<dbReference type="BioGRID" id="248875">
    <property type="interactions" value="14"/>
</dbReference>
<dbReference type="FunCoup" id="P70579">
    <property type="interactions" value="1210"/>
</dbReference>
<dbReference type="IntAct" id="P70579">
    <property type="interactions" value="5"/>
</dbReference>
<dbReference type="MINT" id="P70579"/>
<dbReference type="STRING" id="10116.ENSRNOP00000035953"/>
<dbReference type="BindingDB" id="P70579"/>
<dbReference type="ChEMBL" id="CHEMBL2718"/>
<dbReference type="DrugCentral" id="P70579"/>
<dbReference type="GuidetoPHARMACOLOGY" id="296"/>
<dbReference type="GlyCosmos" id="P70579">
    <property type="glycosylation" value="5 sites, No reported glycans"/>
</dbReference>
<dbReference type="GlyGen" id="P70579">
    <property type="glycosylation" value="5 sites"/>
</dbReference>
<dbReference type="PhosphoSitePlus" id="P70579"/>
<dbReference type="PaxDb" id="10116-ENSRNOP00000053829"/>
<dbReference type="GeneID" id="60590"/>
<dbReference type="KEGG" id="rno:60590"/>
<dbReference type="UCSC" id="RGD:619858">
    <property type="organism name" value="rat"/>
</dbReference>
<dbReference type="AGR" id="RGD:619858"/>
<dbReference type="CTD" id="2918"/>
<dbReference type="RGD" id="619858">
    <property type="gene designation" value="Grm8"/>
</dbReference>
<dbReference type="eggNOG" id="KOG1056">
    <property type="taxonomic scope" value="Eukaryota"/>
</dbReference>
<dbReference type="InParanoid" id="P70579"/>
<dbReference type="OrthoDB" id="425344at2759"/>
<dbReference type="PhylomeDB" id="P70579"/>
<dbReference type="Reactome" id="R-RNO-418594">
    <property type="pathway name" value="G alpha (i) signalling events"/>
</dbReference>
<dbReference type="Reactome" id="R-RNO-420499">
    <property type="pathway name" value="Class C/3 (Metabotropic glutamate/pheromone receptors)"/>
</dbReference>
<dbReference type="PRO" id="PR:P70579"/>
<dbReference type="Proteomes" id="UP000002494">
    <property type="component" value="Unplaced"/>
</dbReference>
<dbReference type="GO" id="GO:0098982">
    <property type="term" value="C:GABA-ergic synapse"/>
    <property type="evidence" value="ECO:0000314"/>
    <property type="project" value="SynGO"/>
</dbReference>
<dbReference type="GO" id="GO:0098978">
    <property type="term" value="C:glutamatergic synapse"/>
    <property type="evidence" value="ECO:0000314"/>
    <property type="project" value="SynGO"/>
</dbReference>
<dbReference type="GO" id="GO:0043025">
    <property type="term" value="C:neuronal cell body"/>
    <property type="evidence" value="ECO:0000314"/>
    <property type="project" value="RGD"/>
</dbReference>
<dbReference type="GO" id="GO:0005886">
    <property type="term" value="C:plasma membrane"/>
    <property type="evidence" value="ECO:0000314"/>
    <property type="project" value="UniProtKB"/>
</dbReference>
<dbReference type="GO" id="GO:0045211">
    <property type="term" value="C:postsynaptic membrane"/>
    <property type="evidence" value="ECO:0000304"/>
    <property type="project" value="UniProtKB"/>
</dbReference>
<dbReference type="GO" id="GO:0048787">
    <property type="term" value="C:presynaptic active zone membrane"/>
    <property type="evidence" value="ECO:0000314"/>
    <property type="project" value="SynGO"/>
</dbReference>
<dbReference type="GO" id="GO:0042734">
    <property type="term" value="C:presynaptic membrane"/>
    <property type="evidence" value="ECO:0000314"/>
    <property type="project" value="UniProtKB"/>
</dbReference>
<dbReference type="GO" id="GO:0004930">
    <property type="term" value="F:G protein-coupled receptor activity"/>
    <property type="evidence" value="ECO:0000250"/>
    <property type="project" value="UniProtKB"/>
</dbReference>
<dbReference type="GO" id="GO:0008066">
    <property type="term" value="F:glutamate receptor activity"/>
    <property type="evidence" value="ECO:0000250"/>
    <property type="project" value="UniProtKB"/>
</dbReference>
<dbReference type="GO" id="GO:0001642">
    <property type="term" value="F:group III metabotropic glutamate receptor activity"/>
    <property type="evidence" value="ECO:0000314"/>
    <property type="project" value="RGD"/>
</dbReference>
<dbReference type="GO" id="GO:0007196">
    <property type="term" value="P:adenylate cyclase-inhibiting G protein-coupled glutamate receptor signaling pathway"/>
    <property type="evidence" value="ECO:0000250"/>
    <property type="project" value="UniProtKB"/>
</dbReference>
<dbReference type="GO" id="GO:0007193">
    <property type="term" value="P:adenylate cyclase-inhibiting G protein-coupled receptor signaling pathway"/>
    <property type="evidence" value="ECO:0000266"/>
    <property type="project" value="RGD"/>
</dbReference>
<dbReference type="GO" id="GO:0007268">
    <property type="term" value="P:chemical synaptic transmission"/>
    <property type="evidence" value="ECO:0000314"/>
    <property type="project" value="UniProtKB"/>
</dbReference>
<dbReference type="GO" id="GO:0050966">
    <property type="term" value="P:detection of mechanical stimulus involved in sensory perception of pain"/>
    <property type="evidence" value="ECO:0000314"/>
    <property type="project" value="RGD"/>
</dbReference>
<dbReference type="GO" id="GO:0007216">
    <property type="term" value="P:G protein-coupled glutamate receptor signaling pathway"/>
    <property type="evidence" value="ECO:0000318"/>
    <property type="project" value="GO_Central"/>
</dbReference>
<dbReference type="GO" id="GO:0099171">
    <property type="term" value="P:presynaptic modulation of chemical synaptic transmission"/>
    <property type="evidence" value="ECO:0000314"/>
    <property type="project" value="SynGO"/>
</dbReference>
<dbReference type="GO" id="GO:0046928">
    <property type="term" value="P:regulation of neurotransmitter secretion"/>
    <property type="evidence" value="ECO:0000314"/>
    <property type="project" value="UniProtKB"/>
</dbReference>
<dbReference type="GO" id="GO:0051966">
    <property type="term" value="P:regulation of synaptic transmission, glutamatergic"/>
    <property type="evidence" value="ECO:0000318"/>
    <property type="project" value="GO_Central"/>
</dbReference>
<dbReference type="GO" id="GO:0019233">
    <property type="term" value="P:sensory perception of pain"/>
    <property type="evidence" value="ECO:0000304"/>
    <property type="project" value="UniProtKB"/>
</dbReference>
<dbReference type="GO" id="GO:0035249">
    <property type="term" value="P:synaptic transmission, glutamatergic"/>
    <property type="evidence" value="ECO:0000314"/>
    <property type="project" value="UniProtKB"/>
</dbReference>
<dbReference type="CDD" id="cd15454">
    <property type="entry name" value="7tmC_mGluR8"/>
    <property type="match status" value="1"/>
</dbReference>
<dbReference type="CDD" id="cd06376">
    <property type="entry name" value="PBP1_mGluR_groupIII"/>
    <property type="match status" value="1"/>
</dbReference>
<dbReference type="FunFam" id="3.40.50.2300:FF:000196">
    <property type="entry name" value="Glutamate metabotropic receptor 7"/>
    <property type="match status" value="1"/>
</dbReference>
<dbReference type="FunFam" id="3.40.50.2300:FF:000009">
    <property type="entry name" value="Glutamate receptor, metabotropic 4"/>
    <property type="match status" value="1"/>
</dbReference>
<dbReference type="FunFam" id="2.10.50.30:FF:000001">
    <property type="entry name" value="metabotropic glutamate receptor 1"/>
    <property type="match status" value="1"/>
</dbReference>
<dbReference type="FunFam" id="3.40.50.2300:FF:000176">
    <property type="entry name" value="metabotropic glutamate receptor 7"/>
    <property type="match status" value="1"/>
</dbReference>
<dbReference type="Gene3D" id="3.40.50.2300">
    <property type="match status" value="2"/>
</dbReference>
<dbReference type="Gene3D" id="2.10.50.30">
    <property type="entry name" value="GPCR, family 3, nine cysteines domain"/>
    <property type="match status" value="1"/>
</dbReference>
<dbReference type="InterPro" id="IPR001828">
    <property type="entry name" value="ANF_lig-bd_rcpt"/>
</dbReference>
<dbReference type="InterPro" id="IPR000337">
    <property type="entry name" value="GPCR_3"/>
</dbReference>
<dbReference type="InterPro" id="IPR011500">
    <property type="entry name" value="GPCR_3_9-Cys_dom"/>
</dbReference>
<dbReference type="InterPro" id="IPR038550">
    <property type="entry name" value="GPCR_3_9-Cys_sf"/>
</dbReference>
<dbReference type="InterPro" id="IPR017978">
    <property type="entry name" value="GPCR_3_C"/>
</dbReference>
<dbReference type="InterPro" id="IPR017979">
    <property type="entry name" value="GPCR_3_CS"/>
</dbReference>
<dbReference type="InterPro" id="IPR000144">
    <property type="entry name" value="GPCR_3_mGluR8"/>
</dbReference>
<dbReference type="InterPro" id="IPR000162">
    <property type="entry name" value="GPCR_3_mtglu_rcpt"/>
</dbReference>
<dbReference type="InterPro" id="IPR050726">
    <property type="entry name" value="mGluR"/>
</dbReference>
<dbReference type="InterPro" id="IPR028082">
    <property type="entry name" value="Peripla_BP_I"/>
</dbReference>
<dbReference type="PANTHER" id="PTHR24060">
    <property type="entry name" value="METABOTROPIC GLUTAMATE RECEPTOR"/>
    <property type="match status" value="1"/>
</dbReference>
<dbReference type="Pfam" id="PF00003">
    <property type="entry name" value="7tm_3"/>
    <property type="match status" value="1"/>
</dbReference>
<dbReference type="Pfam" id="PF01094">
    <property type="entry name" value="ANF_receptor"/>
    <property type="match status" value="1"/>
</dbReference>
<dbReference type="Pfam" id="PF07562">
    <property type="entry name" value="NCD3G"/>
    <property type="match status" value="1"/>
</dbReference>
<dbReference type="PRINTS" id="PR00248">
    <property type="entry name" value="GPCRMGR"/>
</dbReference>
<dbReference type="PRINTS" id="PR01058">
    <property type="entry name" value="MTABOTROPC8R"/>
</dbReference>
<dbReference type="PRINTS" id="PR00593">
    <property type="entry name" value="MTABOTROPICR"/>
</dbReference>
<dbReference type="SUPFAM" id="SSF53822">
    <property type="entry name" value="Periplasmic binding protein-like I"/>
    <property type="match status" value="1"/>
</dbReference>
<dbReference type="PROSITE" id="PS00979">
    <property type="entry name" value="G_PROTEIN_RECEP_F3_1"/>
    <property type="match status" value="1"/>
</dbReference>
<dbReference type="PROSITE" id="PS00980">
    <property type="entry name" value="G_PROTEIN_RECEP_F3_2"/>
    <property type="match status" value="1"/>
</dbReference>
<dbReference type="PROSITE" id="PS00981">
    <property type="entry name" value="G_PROTEIN_RECEP_F3_3"/>
    <property type="match status" value="1"/>
</dbReference>
<dbReference type="PROSITE" id="PS50259">
    <property type="entry name" value="G_PROTEIN_RECEP_F3_4"/>
    <property type="match status" value="1"/>
</dbReference>
<sequence length="908" mass="101867">MVCEGKRLASCPCFFLLTAKFYWILTMMQRTHSQEYAHSIRVDGDIILGGLFPVHAKGERGVPCGELKKEKGIHRLEAMLYAIDQINKDPDLLSNITLGVRILDTCSRDTYALEQSLTFVQALIEKDASDVKCANGDPPIFTKPDKISGVIGAAASSVSIMVANILRLFKIPQISYASTAPELSDNTRYDFFSRVVPPDSYQAQAMVDIVTALGWNYVSTLASEGNYGESGVEAFTQISREIGGVCIAQSQKIPREPRPGEFEKIIKRLLETPNARAVIMFANEDDIRRILEAAKKLNQSGHFLWIGSDSWGSKIAPVYQQEEIAEGAVTILPKRASIDGFDRYFRSRTLANNRRNVWFAEFWEENFGCKLGSHGKRNSHIKKCTGLERIARDSSYEQEGKVQFVIDAVYSMAYALHNMHKERCPGYIGLCPRMVTIDGKELLGYIRAVNFNGSAGTPVTFNENGDAPGRYDIFQYQINNKSTEYKIIGHWTNQLHLKVEDMQWANREHTHPASVCSLPCKPGERKKTVKGVPCCWHCERCEGYNYQVDELSCELCPLDQRPNINRTGCQRIPIIKLEWHSPWAVVPVFIAILGIIATTFVIVTFVRYNDTPIVRASGRELSYVLLTGIFLCYSITFLMIAAPDTIICSFRRIFLGLGMCFSYAALLTKTNRIHRIFEQGKKSVTAPKFISPASQLVITFSLISVQLLGVFVWFVVDPPHTIIDYGEQRTLDPENARGVLKCDISDLSLICSLGYSILLMVTCTVYAIKTRGVPETFNEAKPIGFTMYTTCIIWLAFIPIFFGTAQSAEKMYIQTTTLTVSMSLSASVSLGMLYMPKVYIIIFHPEQNVQKRKRSFKAVVTAATMQSKLIQKGNDRPNGEVKSELCESLETNTSSTKTTYISYSNHSI</sequence>
<accession>P70579</accession>
<name>GRM8_RAT</name>
<reference key="1">
    <citation type="journal article" date="1997" name="Mol. Pharmacol.">
        <title>Cloning and expression of rat metabotropic glutamate receptor 8 reveals a distinct pharmacological profile.</title>
        <authorList>
            <person name="Saugstad J.A."/>
            <person name="Kinzie J.M."/>
            <person name="Shinohara M.M."/>
            <person name="Segerson T.P."/>
            <person name="Westbrook G.L."/>
        </authorList>
    </citation>
    <scope>NUCLEOTIDE SEQUENCE [MRNA]</scope>
</reference>
<reference key="2">
    <citation type="journal article" date="2000" name="Eur. J. Neurosci.">
        <title>Interaction of the C-terminal tail region of the metabotropic glutamate receptor 7 with the protein kinase C substrate PICK1.</title>
        <authorList>
            <person name="El Far O."/>
            <person name="Airas J."/>
            <person name="Wischmeyer E."/>
            <person name="Nehring R.B."/>
            <person name="Karschin A."/>
            <person name="Betz H."/>
        </authorList>
    </citation>
    <scope>INTERACTION WITH PICK1</scope>
</reference>
<proteinExistence type="evidence at protein level"/>
<evidence type="ECO:0000250" key="1"/>
<evidence type="ECO:0000250" key="2">
    <source>
        <dbReference type="UniProtKB" id="P47743"/>
    </source>
</evidence>
<evidence type="ECO:0000255" key="3"/>
<evidence type="ECO:0000269" key="4">
    <source>
    </source>
</evidence>
<evidence type="ECO:0000305" key="5"/>
<protein>
    <recommendedName>
        <fullName>Metabotropic glutamate receptor 8</fullName>
        <shortName>mGluR8</shortName>
    </recommendedName>
</protein>
<keyword id="KW-1003">Cell membrane</keyword>
<keyword id="KW-1015">Disulfide bond</keyword>
<keyword id="KW-0297">G-protein coupled receptor</keyword>
<keyword id="KW-0325">Glycoprotein</keyword>
<keyword id="KW-1017">Isopeptide bond</keyword>
<keyword id="KW-0472">Membrane</keyword>
<keyword id="KW-0675">Receptor</keyword>
<keyword id="KW-1185">Reference proteome</keyword>
<keyword id="KW-0716">Sensory transduction</keyword>
<keyword id="KW-0732">Signal</keyword>
<keyword id="KW-0807">Transducer</keyword>
<keyword id="KW-0812">Transmembrane</keyword>
<keyword id="KW-1133">Transmembrane helix</keyword>
<keyword id="KW-0832">Ubl conjugation</keyword>
<gene>
    <name type="primary">Grm8</name>
    <name type="synonym">Gprc1h</name>
    <name type="synonym">Mglur8</name>
</gene>